<name>RAN_DICDI</name>
<comment type="function">
    <text evidence="1">GTP-binding protein involved in nucleocytoplasmic transport. Required for the import of protein into the nucleus and also for RNA export. Involved in chromatin condensation and control of cell cycle (By similarity).</text>
</comment>
<comment type="subunit">
    <text evidence="2">Found in a nuclear export complex with RanGTP, exportin and pre-miRNA (By similarity).</text>
</comment>
<comment type="subcellular location">
    <subcellularLocation>
        <location evidence="1">Nucleus</location>
    </subcellularLocation>
</comment>
<comment type="similarity">
    <text evidence="3 4">Belongs to the small GTPase superfamily. Ran family.</text>
</comment>
<accession>P33519</accession>
<accession>Q54EW5</accession>
<organism>
    <name type="scientific">Dictyostelium discoideum</name>
    <name type="common">Social amoeba</name>
    <dbReference type="NCBI Taxonomy" id="44689"/>
    <lineage>
        <taxon>Eukaryota</taxon>
        <taxon>Amoebozoa</taxon>
        <taxon>Evosea</taxon>
        <taxon>Eumycetozoa</taxon>
        <taxon>Dictyostelia</taxon>
        <taxon>Dictyosteliales</taxon>
        <taxon>Dictyosteliaceae</taxon>
        <taxon>Dictyostelium</taxon>
    </lineage>
</organism>
<gene>
    <name type="primary">ranA</name>
    <name type="ORF">DDB_G0291235</name>
</gene>
<keyword id="KW-0342">GTP-binding</keyword>
<keyword id="KW-0547">Nucleotide-binding</keyword>
<keyword id="KW-0539">Nucleus</keyword>
<keyword id="KW-0653">Protein transport</keyword>
<keyword id="KW-1185">Reference proteome</keyword>
<keyword id="KW-0813">Transport</keyword>
<protein>
    <recommendedName>
        <fullName>GTP-binding nuclear protein Ran</fullName>
    </recommendedName>
    <alternativeName>
        <fullName>GTPase Ran</fullName>
    </alternativeName>
    <alternativeName>
        <fullName>Ras-like protein TC4</fullName>
    </alternativeName>
    <alternativeName>
        <fullName>Ras-related nuclear protein</fullName>
    </alternativeName>
</protein>
<proteinExistence type="evidence at protein level"/>
<reference key="1">
    <citation type="journal article" date="1993" name="Nucleic Acids Res.">
        <title>Molecular cloning and DNA sequence of a Dictyostelium cDNA encoding a Ran/TC4 related GTP binding protein belonging to the ras superfamily.</title>
        <authorList>
            <person name="Bush J."/>
            <person name="Cardelli J.A."/>
        </authorList>
    </citation>
    <scope>NUCLEOTIDE SEQUENCE [MRNA]</scope>
</reference>
<reference key="2">
    <citation type="journal article" date="2005" name="Nature">
        <title>The genome of the social amoeba Dictyostelium discoideum.</title>
        <authorList>
            <person name="Eichinger L."/>
            <person name="Pachebat J.A."/>
            <person name="Gloeckner G."/>
            <person name="Rajandream M.A."/>
            <person name="Sucgang R."/>
            <person name="Berriman M."/>
            <person name="Song J."/>
            <person name="Olsen R."/>
            <person name="Szafranski K."/>
            <person name="Xu Q."/>
            <person name="Tunggal B."/>
            <person name="Kummerfeld S."/>
            <person name="Madera M."/>
            <person name="Konfortov B.A."/>
            <person name="Rivero F."/>
            <person name="Bankier A.T."/>
            <person name="Lehmann R."/>
            <person name="Hamlin N."/>
            <person name="Davies R."/>
            <person name="Gaudet P."/>
            <person name="Fey P."/>
            <person name="Pilcher K."/>
            <person name="Chen G."/>
            <person name="Saunders D."/>
            <person name="Sodergren E.J."/>
            <person name="Davis P."/>
            <person name="Kerhornou A."/>
            <person name="Nie X."/>
            <person name="Hall N."/>
            <person name="Anjard C."/>
            <person name="Hemphill L."/>
            <person name="Bason N."/>
            <person name="Farbrother P."/>
            <person name="Desany B."/>
            <person name="Just E."/>
            <person name="Morio T."/>
            <person name="Rost R."/>
            <person name="Churcher C.M."/>
            <person name="Cooper J."/>
            <person name="Haydock S."/>
            <person name="van Driessche N."/>
            <person name="Cronin A."/>
            <person name="Goodhead I."/>
            <person name="Muzny D.M."/>
            <person name="Mourier T."/>
            <person name="Pain A."/>
            <person name="Lu M."/>
            <person name="Harper D."/>
            <person name="Lindsay R."/>
            <person name="Hauser H."/>
            <person name="James K.D."/>
            <person name="Quiles M."/>
            <person name="Madan Babu M."/>
            <person name="Saito T."/>
            <person name="Buchrieser C."/>
            <person name="Wardroper A."/>
            <person name="Felder M."/>
            <person name="Thangavelu M."/>
            <person name="Johnson D."/>
            <person name="Knights A."/>
            <person name="Loulseged H."/>
            <person name="Mungall K.L."/>
            <person name="Oliver K."/>
            <person name="Price C."/>
            <person name="Quail M.A."/>
            <person name="Urushihara H."/>
            <person name="Hernandez J."/>
            <person name="Rabbinowitsch E."/>
            <person name="Steffen D."/>
            <person name="Sanders M."/>
            <person name="Ma J."/>
            <person name="Kohara Y."/>
            <person name="Sharp S."/>
            <person name="Simmonds M.N."/>
            <person name="Spiegler S."/>
            <person name="Tivey A."/>
            <person name="Sugano S."/>
            <person name="White B."/>
            <person name="Walker D."/>
            <person name="Woodward J.R."/>
            <person name="Winckler T."/>
            <person name="Tanaka Y."/>
            <person name="Shaulsky G."/>
            <person name="Schleicher M."/>
            <person name="Weinstock G.M."/>
            <person name="Rosenthal A."/>
            <person name="Cox E.C."/>
            <person name="Chisholm R.L."/>
            <person name="Gibbs R.A."/>
            <person name="Loomis W.F."/>
            <person name="Platzer M."/>
            <person name="Kay R.R."/>
            <person name="Williams J.G."/>
            <person name="Dear P.H."/>
            <person name="Noegel A.A."/>
            <person name="Barrell B.G."/>
            <person name="Kuspa A."/>
        </authorList>
    </citation>
    <scope>NUCLEOTIDE SEQUENCE [LARGE SCALE GENOMIC DNA]</scope>
    <source>
        <strain>AX4</strain>
    </source>
</reference>
<reference key="3">
    <citation type="journal article" date="2006" name="Eur. J. Cell Biol.">
        <title>Identification and isolation of Dictyostelium microtubule-associated protein interactors by tandem affinity purification.</title>
        <authorList>
            <person name="Koch K.V."/>
            <person name="Reinders Y."/>
            <person name="Ho T.-H."/>
            <person name="Sickmann A."/>
            <person name="Graef R."/>
        </authorList>
    </citation>
    <scope>IDENTIFICATION BY MASS SPECTROMETRY [LARGE SCALE ANALYSIS]</scope>
    <source>
        <strain>AX2</strain>
    </source>
</reference>
<reference key="4">
    <citation type="journal article" date="2006" name="J. Proteome Res.">
        <title>Identification of novel centrosomal proteins in Dictyostelium discoideum by comparative proteomic approaches.</title>
        <authorList>
            <person name="Reinders Y."/>
            <person name="Schulz I."/>
            <person name="Graef R."/>
            <person name="Sickmann A."/>
        </authorList>
    </citation>
    <scope>IDENTIFICATION BY MASS SPECTROMETRY [LARGE SCALE ANALYSIS]</scope>
</reference>
<feature type="chain" id="PRO_0000208709" description="GTP-binding nuclear protein Ran">
    <location>
        <begin position="1"/>
        <end position="212"/>
    </location>
</feature>
<feature type="domain" description="Small GTPase Ran-type" evidence="3">
    <location>
        <begin position="3"/>
        <end position="167"/>
    </location>
</feature>
<feature type="region of interest" description="Switch-I" evidence="3">
    <location>
        <begin position="33"/>
        <end position="41"/>
    </location>
</feature>
<feature type="region of interest" description="Switch-II" evidence="3">
    <location>
        <begin position="64"/>
        <end position="80"/>
    </location>
</feature>
<feature type="binding site" evidence="2">
    <location>
        <begin position="14"/>
        <end position="21"/>
    </location>
    <ligand>
        <name>GTP</name>
        <dbReference type="ChEBI" id="CHEBI:37565"/>
    </ligand>
</feature>
<feature type="binding site" evidence="2">
    <location>
        <position position="64"/>
    </location>
    <ligand>
        <name>GTP</name>
        <dbReference type="ChEBI" id="CHEBI:37565"/>
    </ligand>
</feature>
<feature type="binding site" evidence="2">
    <location>
        <begin position="118"/>
        <end position="121"/>
    </location>
    <ligand>
        <name>GTP</name>
        <dbReference type="ChEBI" id="CHEBI:37565"/>
    </ligand>
</feature>
<feature type="binding site" evidence="2">
    <location>
        <begin position="146"/>
        <end position="148"/>
    </location>
    <ligand>
        <name>GTP</name>
        <dbReference type="ChEBI" id="CHEBI:37565"/>
    </ligand>
</feature>
<sequence length="212" mass="24047">MAEKEQIKLVLVGDGGVGKTTFVQRHLTGEFEPRYIPTLGVSVHPLIFYTNFGKIHFNVWDTAGQEKFGGLRDGYYIQGNCAIIMFDVTSRISYKNVPNWHSDLTRVCENIPIVLCGNKVDVKDRKVKPSQIVFHRRYNLSYYDVSAKSNYNFEKPFVWLTSKLLGNKAVTLVQQPTLKLPETVLDSNLMSLYEKEVADAAALPLPEDNDDL</sequence>
<evidence type="ECO:0000250" key="1"/>
<evidence type="ECO:0000250" key="2">
    <source>
        <dbReference type="UniProtKB" id="P62825"/>
    </source>
</evidence>
<evidence type="ECO:0000255" key="3">
    <source>
        <dbReference type="PROSITE-ProRule" id="PRU00752"/>
    </source>
</evidence>
<evidence type="ECO:0000305" key="4"/>
<dbReference type="EMBL" id="L09720">
    <property type="protein sequence ID" value="AAA33255.1"/>
    <property type="molecule type" value="mRNA"/>
</dbReference>
<dbReference type="EMBL" id="AAFI02000177">
    <property type="protein sequence ID" value="EAL61601.1"/>
    <property type="molecule type" value="Genomic_DNA"/>
</dbReference>
<dbReference type="PIR" id="S35619">
    <property type="entry name" value="S35619"/>
</dbReference>
<dbReference type="RefSeq" id="XP_635125.1">
    <property type="nucleotide sequence ID" value="XM_630033.1"/>
</dbReference>
<dbReference type="SMR" id="P33519"/>
<dbReference type="FunCoup" id="P33519">
    <property type="interactions" value="1033"/>
</dbReference>
<dbReference type="IntAct" id="P33519">
    <property type="interactions" value="3"/>
</dbReference>
<dbReference type="STRING" id="44689.P33519"/>
<dbReference type="PaxDb" id="44689-DDB0215409"/>
<dbReference type="EnsemblProtists" id="EAL61601">
    <property type="protein sequence ID" value="EAL61601"/>
    <property type="gene ID" value="DDB_G0291235"/>
</dbReference>
<dbReference type="GeneID" id="8628071"/>
<dbReference type="KEGG" id="ddi:DDB_G0291235"/>
<dbReference type="dictyBase" id="DDB_G0291235">
    <property type="gene designation" value="ranA"/>
</dbReference>
<dbReference type="VEuPathDB" id="AmoebaDB:DDB_G0291235"/>
<dbReference type="eggNOG" id="KOG0096">
    <property type="taxonomic scope" value="Eukaryota"/>
</dbReference>
<dbReference type="HOGENOM" id="CLU_041217_13_0_1"/>
<dbReference type="InParanoid" id="P33519"/>
<dbReference type="OMA" id="FNAWDTA"/>
<dbReference type="PhylomeDB" id="P33519"/>
<dbReference type="Reactome" id="R-DDI-9615933">
    <property type="pathway name" value="Postmitotic nuclear pore complex (NPC) reformation"/>
</dbReference>
<dbReference type="PRO" id="PR:P33519"/>
<dbReference type="Proteomes" id="UP000002195">
    <property type="component" value="Chromosome 6"/>
</dbReference>
<dbReference type="GO" id="GO:0005813">
    <property type="term" value="C:centrosome"/>
    <property type="evidence" value="ECO:0007005"/>
    <property type="project" value="dictyBase"/>
</dbReference>
<dbReference type="GO" id="GO:0005737">
    <property type="term" value="C:cytoplasm"/>
    <property type="evidence" value="ECO:0000318"/>
    <property type="project" value="GO_Central"/>
</dbReference>
<dbReference type="GO" id="GO:0031012">
    <property type="term" value="C:extracellular matrix"/>
    <property type="evidence" value="ECO:0007005"/>
    <property type="project" value="dictyBase"/>
</dbReference>
<dbReference type="GO" id="GO:0005811">
    <property type="term" value="C:lipid droplet"/>
    <property type="evidence" value="ECO:0007005"/>
    <property type="project" value="dictyBase"/>
</dbReference>
<dbReference type="GO" id="GO:0005634">
    <property type="term" value="C:nucleus"/>
    <property type="evidence" value="ECO:0000318"/>
    <property type="project" value="GO_Central"/>
</dbReference>
<dbReference type="GO" id="GO:0140220">
    <property type="term" value="C:pathogen-containing vacuole"/>
    <property type="evidence" value="ECO:0007005"/>
    <property type="project" value="dictyBase"/>
</dbReference>
<dbReference type="GO" id="GO:0045335">
    <property type="term" value="C:phagocytic vesicle"/>
    <property type="evidence" value="ECO:0007005"/>
    <property type="project" value="dictyBase"/>
</dbReference>
<dbReference type="GO" id="GO:0005525">
    <property type="term" value="F:GTP binding"/>
    <property type="evidence" value="ECO:0007669"/>
    <property type="project" value="UniProtKB-KW"/>
</dbReference>
<dbReference type="GO" id="GO:0003924">
    <property type="term" value="F:GTPase activity"/>
    <property type="evidence" value="ECO:0000318"/>
    <property type="project" value="GO_Central"/>
</dbReference>
<dbReference type="GO" id="GO:0006606">
    <property type="term" value="P:protein import into nucleus"/>
    <property type="evidence" value="ECO:0000318"/>
    <property type="project" value="GO_Central"/>
</dbReference>
<dbReference type="GO" id="GO:0000054">
    <property type="term" value="P:ribosomal subunit export from nucleus"/>
    <property type="evidence" value="ECO:0000318"/>
    <property type="project" value="GO_Central"/>
</dbReference>
<dbReference type="CDD" id="cd00877">
    <property type="entry name" value="Ran"/>
    <property type="match status" value="1"/>
</dbReference>
<dbReference type="FunFam" id="3.40.50.300:FF:004910">
    <property type="entry name" value="GTP-binding nuclear protein Ran"/>
    <property type="match status" value="1"/>
</dbReference>
<dbReference type="Gene3D" id="3.40.50.300">
    <property type="entry name" value="P-loop containing nucleotide triphosphate hydrolases"/>
    <property type="match status" value="1"/>
</dbReference>
<dbReference type="InterPro" id="IPR027417">
    <property type="entry name" value="P-loop_NTPase"/>
</dbReference>
<dbReference type="InterPro" id="IPR002041">
    <property type="entry name" value="Ran_GTPase"/>
</dbReference>
<dbReference type="InterPro" id="IPR005225">
    <property type="entry name" value="Small_GTP-bd"/>
</dbReference>
<dbReference type="InterPro" id="IPR001806">
    <property type="entry name" value="Small_GTPase"/>
</dbReference>
<dbReference type="NCBIfam" id="TIGR00231">
    <property type="entry name" value="small_GTP"/>
    <property type="match status" value="1"/>
</dbReference>
<dbReference type="PANTHER" id="PTHR24071:SF0">
    <property type="entry name" value="GTP-BINDING NUCLEAR PROTEIN RAN"/>
    <property type="match status" value="1"/>
</dbReference>
<dbReference type="PANTHER" id="PTHR24071">
    <property type="entry name" value="RAN GTPASE"/>
    <property type="match status" value="1"/>
</dbReference>
<dbReference type="Pfam" id="PF00071">
    <property type="entry name" value="Ras"/>
    <property type="match status" value="1"/>
</dbReference>
<dbReference type="PRINTS" id="PR00627">
    <property type="entry name" value="GTPRANTC4"/>
</dbReference>
<dbReference type="SMART" id="SM00175">
    <property type="entry name" value="RAB"/>
    <property type="match status" value="1"/>
</dbReference>
<dbReference type="SMART" id="SM00176">
    <property type="entry name" value="RAN"/>
    <property type="match status" value="1"/>
</dbReference>
<dbReference type="SMART" id="SM00173">
    <property type="entry name" value="RAS"/>
    <property type="match status" value="1"/>
</dbReference>
<dbReference type="SMART" id="SM00174">
    <property type="entry name" value="RHO"/>
    <property type="match status" value="1"/>
</dbReference>
<dbReference type="SUPFAM" id="SSF52540">
    <property type="entry name" value="P-loop containing nucleoside triphosphate hydrolases"/>
    <property type="match status" value="1"/>
</dbReference>
<dbReference type="PROSITE" id="PS51418">
    <property type="entry name" value="RAN"/>
    <property type="match status" value="1"/>
</dbReference>